<accession>Q920Q2</accession>
<accession>Q9QXV2</accession>
<organism>
    <name type="scientific">Mus musculus</name>
    <name type="common">Mouse</name>
    <dbReference type="NCBI Taxonomy" id="10090"/>
    <lineage>
        <taxon>Eukaryota</taxon>
        <taxon>Metazoa</taxon>
        <taxon>Chordata</taxon>
        <taxon>Craniata</taxon>
        <taxon>Vertebrata</taxon>
        <taxon>Euteleostomi</taxon>
        <taxon>Mammalia</taxon>
        <taxon>Eutheria</taxon>
        <taxon>Euarchontoglires</taxon>
        <taxon>Glires</taxon>
        <taxon>Rodentia</taxon>
        <taxon>Myomorpha</taxon>
        <taxon>Muroidea</taxon>
        <taxon>Muridae</taxon>
        <taxon>Murinae</taxon>
        <taxon>Mus</taxon>
        <taxon>Mus</taxon>
    </lineage>
</organism>
<comment type="function">
    <text evidence="6">Deoxycytidyl transferase involved in DNA repair. Transfers a dCMP residue from dCTP to the 3'-end of a DNA primer in a template-dependent reaction. May assist in the first step in the bypass of abasic lesions by the insertion of a nucleotide opposite the lesion. Required for normal induction of mutations by physical and chemical agents.</text>
</comment>
<comment type="subunit">
    <text evidence="1 6 7">Interacts with FAAP20 (By similarity). Monomer. Interacts with the DNA polymerase zeta which is composed of REV3L and MAD2L2; the interaction with MAD2L2 is direct and requires that REV3L is in its closed conformation. Interacts with POLH, POLI and POLK.</text>
</comment>
<comment type="interaction">
    <interactant intactId="EBI-2114764">
        <id>Q920Q2</id>
    </interactant>
    <interactant intactId="EBI-15965017">
        <id>Q6NZ36-1</id>
        <label>FAAP20</label>
    </interactant>
    <organismsDiffer>true</organismsDiffer>
    <experiments>7</experiments>
</comment>
<comment type="subcellular location">
    <subcellularLocation>
        <location evidence="8">Nucleus</location>
    </subcellularLocation>
</comment>
<comment type="tissue specificity">
    <text evidence="6">Ubiquitous.</text>
</comment>
<comment type="domain">
    <text>The C-terminal domain is necessary for protein interactions.</text>
</comment>
<comment type="similarity">
    <text evidence="8">Belongs to the DNA polymerase type-Y family.</text>
</comment>
<feature type="chain" id="PRO_0000173993" description="DNA repair protein REV1">
    <location>
        <begin position="1"/>
        <end position="1249"/>
    </location>
</feature>
<feature type="domain" description="BRCT" evidence="3">
    <location>
        <begin position="44"/>
        <end position="131"/>
    </location>
</feature>
<feature type="domain" description="UmuC" evidence="4">
    <location>
        <begin position="417"/>
        <end position="651"/>
    </location>
</feature>
<feature type="region of interest" description="Disordered" evidence="5">
    <location>
        <begin position="253"/>
        <end position="323"/>
    </location>
</feature>
<feature type="region of interest" description="Interaction with target DNA" evidence="1">
    <location>
        <begin position="350"/>
        <end position="360"/>
    </location>
</feature>
<feature type="region of interest" description="Interaction with target DNA" evidence="1">
    <location>
        <begin position="651"/>
        <end position="654"/>
    </location>
</feature>
<feature type="region of interest" description="Interaction with target DNA" evidence="1">
    <location>
        <begin position="707"/>
        <end position="715"/>
    </location>
</feature>
<feature type="region of interest" description="Disordered" evidence="5">
    <location>
        <begin position="1035"/>
        <end position="1109"/>
    </location>
</feature>
<feature type="region of interest" description="Protein interaction domain; mediates interaction with DNA polymerase zeta">
    <location>
        <begin position="1150"/>
        <end position="1249"/>
    </location>
</feature>
<feature type="short sequence motif" description="Nuclear localization signal" evidence="2">
    <location>
        <begin position="1072"/>
        <end position="1078"/>
    </location>
</feature>
<feature type="compositionally biased region" description="Basic and acidic residues" evidence="5">
    <location>
        <begin position="259"/>
        <end position="275"/>
    </location>
</feature>
<feature type="compositionally biased region" description="Polar residues" evidence="5">
    <location>
        <begin position="294"/>
        <end position="319"/>
    </location>
</feature>
<feature type="compositionally biased region" description="Basic and acidic residues" evidence="5">
    <location>
        <begin position="1035"/>
        <end position="1047"/>
    </location>
</feature>
<feature type="compositionally biased region" description="Polar residues" evidence="5">
    <location>
        <begin position="1048"/>
        <end position="1057"/>
    </location>
</feature>
<feature type="binding site" evidence="1">
    <location>
        <position position="355"/>
    </location>
    <ligand>
        <name>dCTP</name>
        <dbReference type="ChEBI" id="CHEBI:61481"/>
    </ligand>
</feature>
<feature type="binding site" evidence="1">
    <location>
        <begin position="421"/>
        <end position="425"/>
    </location>
    <ligand>
        <name>dCTP</name>
        <dbReference type="ChEBI" id="CHEBI:61481"/>
    </ligand>
</feature>
<feature type="binding site" evidence="4">
    <location>
        <position position="421"/>
    </location>
    <ligand>
        <name>Mg(2+)</name>
        <dbReference type="ChEBI" id="CHEBI:18420"/>
        <label>1</label>
    </ligand>
</feature>
<feature type="binding site" evidence="4">
    <location>
        <position position="421"/>
    </location>
    <ligand>
        <name>Mg(2+)</name>
        <dbReference type="ChEBI" id="CHEBI:18420"/>
        <label>2</label>
    </ligand>
</feature>
<feature type="binding site" evidence="1">
    <location>
        <begin position="508"/>
        <end position="514"/>
    </location>
    <ligand>
        <name>dCTP</name>
        <dbReference type="ChEBI" id="CHEBI:61481"/>
    </ligand>
</feature>
<feature type="binding site" evidence="1">
    <location>
        <position position="520"/>
    </location>
    <ligand>
        <name>dCTP</name>
        <dbReference type="ChEBI" id="CHEBI:61481"/>
    </ligand>
</feature>
<feature type="binding site" evidence="1">
    <location>
        <position position="568"/>
    </location>
    <ligand>
        <name>dCTP</name>
        <dbReference type="ChEBI" id="CHEBI:61481"/>
    </ligand>
</feature>
<feature type="binding site" evidence="4">
    <location>
        <position position="568"/>
    </location>
    <ligand>
        <name>Mg(2+)</name>
        <dbReference type="ChEBI" id="CHEBI:18420"/>
        <label>1</label>
    </ligand>
</feature>
<feature type="binding site" evidence="4">
    <location>
        <position position="569"/>
    </location>
    <ligand>
        <name>Mg(2+)</name>
        <dbReference type="ChEBI" id="CHEBI:18420"/>
        <label>1</label>
    </ligand>
</feature>
<feature type="site" description="Interaction with target DNA" evidence="1">
    <location>
        <position position="768"/>
    </location>
</feature>
<feature type="site" description="Interaction with target DNA" evidence="1">
    <location>
        <position position="781"/>
    </location>
</feature>
<feature type="sequence conflict" description="In Ref. 2; AAF23323." evidence="8" ref="2">
    <original>K</original>
    <variation>T</variation>
    <location>
        <position position="438"/>
    </location>
</feature>
<feature type="sequence conflict" description="In Ref. 2; AAF23323." evidence="8" ref="2">
    <original>L</original>
    <variation>W</variation>
    <location>
        <position position="555"/>
    </location>
</feature>
<feature type="sequence conflict" description="In Ref. 2; AAF23323." evidence="8" ref="2">
    <original>F</original>
    <variation>S</variation>
    <location>
        <position position="638"/>
    </location>
</feature>
<feature type="sequence conflict" description="In Ref. 2; AAF23323." evidence="8" ref="2">
    <original>L</original>
    <variation>S</variation>
    <location>
        <position position="661"/>
    </location>
</feature>
<feature type="sequence conflict" description="In Ref. 2; AAF23323." evidence="8" ref="2">
    <original>K</original>
    <variation>R</variation>
    <location>
        <position position="684"/>
    </location>
</feature>
<feature type="helix" evidence="9">
    <location>
        <begin position="1163"/>
        <end position="1176"/>
    </location>
</feature>
<feature type="helix" evidence="9">
    <location>
        <begin position="1182"/>
        <end position="1197"/>
    </location>
</feature>
<feature type="helix" evidence="9">
    <location>
        <begin position="1201"/>
        <end position="1216"/>
    </location>
</feature>
<feature type="helix" evidence="9">
    <location>
        <begin position="1221"/>
        <end position="1241"/>
    </location>
</feature>
<feature type="turn" evidence="9">
    <location>
        <begin position="1242"/>
        <end position="1245"/>
    </location>
</feature>
<feature type="strand" evidence="9">
    <location>
        <begin position="1246"/>
        <end position="1248"/>
    </location>
</feature>
<proteinExistence type="evidence at protein level"/>
<keyword id="KW-0002">3D-structure</keyword>
<keyword id="KW-0227">DNA damage</keyword>
<keyword id="KW-0234">DNA repair</keyword>
<keyword id="KW-0237">DNA synthesis</keyword>
<keyword id="KW-0238">DNA-binding</keyword>
<keyword id="KW-0460">Magnesium</keyword>
<keyword id="KW-0479">Metal-binding</keyword>
<keyword id="KW-0548">Nucleotidyltransferase</keyword>
<keyword id="KW-0539">Nucleus</keyword>
<keyword id="KW-1185">Reference proteome</keyword>
<keyword id="KW-0808">Transferase</keyword>
<name>REV1_MOUSE</name>
<dbReference type="EC" id="2.7.7.-"/>
<dbReference type="EMBL" id="AB057418">
    <property type="protein sequence ID" value="BAB64933.1"/>
    <property type="molecule type" value="mRNA"/>
</dbReference>
<dbReference type="EMBL" id="AF179302">
    <property type="protein sequence ID" value="AAF23323.1"/>
    <property type="molecule type" value="mRNA"/>
</dbReference>
<dbReference type="EMBL" id="BC058093">
    <property type="protein sequence ID" value="AAH58093.1"/>
    <property type="molecule type" value="mRNA"/>
</dbReference>
<dbReference type="CCDS" id="CCDS14899.1"/>
<dbReference type="RefSeq" id="NP_062516.2">
    <property type="nucleotide sequence ID" value="NM_019570.3"/>
</dbReference>
<dbReference type="RefSeq" id="XP_006496216.2">
    <property type="nucleotide sequence ID" value="XM_006496153.5"/>
</dbReference>
<dbReference type="RefSeq" id="XP_006496221.1">
    <property type="nucleotide sequence ID" value="XM_006496158.2"/>
</dbReference>
<dbReference type="RefSeq" id="XP_030111499.1">
    <property type="nucleotide sequence ID" value="XM_030255639.2"/>
</dbReference>
<dbReference type="RefSeq" id="XP_036008368.1">
    <property type="nucleotide sequence ID" value="XM_036152475.1"/>
</dbReference>
<dbReference type="RefSeq" id="XP_036008369.1">
    <property type="nucleotide sequence ID" value="XM_036152476.1"/>
</dbReference>
<dbReference type="RefSeq" id="XP_036008370.1">
    <property type="nucleotide sequence ID" value="XM_036152477.1"/>
</dbReference>
<dbReference type="PDB" id="2LSG">
    <property type="method" value="NMR"/>
    <property type="chains" value="A=1150-1249"/>
</dbReference>
<dbReference type="PDB" id="2LSJ">
    <property type="method" value="NMR"/>
    <property type="chains" value="A=1135-1249"/>
</dbReference>
<dbReference type="PDB" id="4FJO">
    <property type="method" value="X-ray"/>
    <property type="resolution" value="2.72 A"/>
    <property type="chains" value="A=1153-1249"/>
</dbReference>
<dbReference type="PDB" id="6C59">
    <property type="method" value="X-ray"/>
    <property type="resolution" value="2.03 A"/>
    <property type="chains" value="A=1150-1249"/>
</dbReference>
<dbReference type="PDB" id="6C8C">
    <property type="method" value="X-ray"/>
    <property type="resolution" value="1.50 A"/>
    <property type="chains" value="A/B=1150-1249"/>
</dbReference>
<dbReference type="PDBsum" id="2LSG"/>
<dbReference type="PDBsum" id="2LSJ"/>
<dbReference type="PDBsum" id="4FJO"/>
<dbReference type="PDBsum" id="6C59"/>
<dbReference type="PDBsum" id="6C8C"/>
<dbReference type="BMRB" id="Q920Q2"/>
<dbReference type="SMR" id="Q920Q2"/>
<dbReference type="BioGRID" id="207845">
    <property type="interactions" value="15"/>
</dbReference>
<dbReference type="DIP" id="DIP-41772N"/>
<dbReference type="FunCoup" id="Q920Q2">
    <property type="interactions" value="3166"/>
</dbReference>
<dbReference type="IntAct" id="Q920Q2">
    <property type="interactions" value="5"/>
</dbReference>
<dbReference type="STRING" id="10090.ENSMUSP00000027251"/>
<dbReference type="GlyGen" id="Q920Q2">
    <property type="glycosylation" value="1 site"/>
</dbReference>
<dbReference type="iPTMnet" id="Q920Q2"/>
<dbReference type="PhosphoSitePlus" id="Q920Q2"/>
<dbReference type="PaxDb" id="10090-ENSMUSP00000027251"/>
<dbReference type="PeptideAtlas" id="Q920Q2"/>
<dbReference type="ProteomicsDB" id="253224"/>
<dbReference type="Antibodypedia" id="32824">
    <property type="antibodies" value="172 antibodies from 28 providers"/>
</dbReference>
<dbReference type="DNASU" id="56210"/>
<dbReference type="Ensembl" id="ENSMUST00000027251.12">
    <property type="protein sequence ID" value="ENSMUSP00000027251.7"/>
    <property type="gene ID" value="ENSMUSG00000026082.12"/>
</dbReference>
<dbReference type="GeneID" id="56210"/>
<dbReference type="KEGG" id="mmu:56210"/>
<dbReference type="UCSC" id="uc007asp.1">
    <property type="organism name" value="mouse"/>
</dbReference>
<dbReference type="AGR" id="MGI:1929074"/>
<dbReference type="CTD" id="51455"/>
<dbReference type="MGI" id="MGI:1929074">
    <property type="gene designation" value="Rev1"/>
</dbReference>
<dbReference type="VEuPathDB" id="HostDB:ENSMUSG00000026082"/>
<dbReference type="eggNOG" id="KOG2093">
    <property type="taxonomic scope" value="Eukaryota"/>
</dbReference>
<dbReference type="GeneTree" id="ENSGT00940000156374"/>
<dbReference type="HOGENOM" id="CLU_003901_0_1_1"/>
<dbReference type="InParanoid" id="Q920Q2"/>
<dbReference type="OMA" id="IKNGMWM"/>
<dbReference type="OrthoDB" id="427711at2759"/>
<dbReference type="PhylomeDB" id="Q920Q2"/>
<dbReference type="TreeFam" id="TF314488"/>
<dbReference type="Reactome" id="R-MMU-110312">
    <property type="pathway name" value="Translesion synthesis by REV1"/>
</dbReference>
<dbReference type="Reactome" id="R-MMU-5655862">
    <property type="pathway name" value="Translesion synthesis by POLK"/>
</dbReference>
<dbReference type="Reactome" id="R-MMU-5656121">
    <property type="pathway name" value="Translesion synthesis by POLI"/>
</dbReference>
<dbReference type="Reactome" id="R-MMU-5656169">
    <property type="pathway name" value="Termination of translesion DNA synthesis"/>
</dbReference>
<dbReference type="BioGRID-ORCS" id="56210">
    <property type="hits" value="4 hits in 114 CRISPR screens"/>
</dbReference>
<dbReference type="ChiTaRS" id="Rev1">
    <property type="organism name" value="mouse"/>
</dbReference>
<dbReference type="PRO" id="PR:Q920Q2"/>
<dbReference type="Proteomes" id="UP000000589">
    <property type="component" value="Chromosome 1"/>
</dbReference>
<dbReference type="RNAct" id="Q920Q2">
    <property type="molecule type" value="protein"/>
</dbReference>
<dbReference type="Bgee" id="ENSMUSG00000026082">
    <property type="expression patterns" value="Expressed in dorsal pancreas and 256 other cell types or tissues"/>
</dbReference>
<dbReference type="ExpressionAtlas" id="Q920Q2">
    <property type="expression patterns" value="baseline and differential"/>
</dbReference>
<dbReference type="GO" id="GO:0005634">
    <property type="term" value="C:nucleus"/>
    <property type="evidence" value="ECO:0007669"/>
    <property type="project" value="UniProtKB-SubCell"/>
</dbReference>
<dbReference type="GO" id="GO:0003684">
    <property type="term" value="F:damaged DNA binding"/>
    <property type="evidence" value="ECO:0007669"/>
    <property type="project" value="InterPro"/>
</dbReference>
<dbReference type="GO" id="GO:0017125">
    <property type="term" value="F:deoxycytidyl transferase activity"/>
    <property type="evidence" value="ECO:0000314"/>
    <property type="project" value="MGI"/>
</dbReference>
<dbReference type="GO" id="GO:0003887">
    <property type="term" value="F:DNA-directed DNA polymerase activity"/>
    <property type="evidence" value="ECO:0007669"/>
    <property type="project" value="InterPro"/>
</dbReference>
<dbReference type="GO" id="GO:0046872">
    <property type="term" value="F:metal ion binding"/>
    <property type="evidence" value="ECO:0007669"/>
    <property type="project" value="UniProtKB-KW"/>
</dbReference>
<dbReference type="GO" id="GO:0042276">
    <property type="term" value="P:error-prone translesion synthesis"/>
    <property type="evidence" value="ECO:0000314"/>
    <property type="project" value="MGI"/>
</dbReference>
<dbReference type="GO" id="GO:0009411">
    <property type="term" value="P:response to UV"/>
    <property type="evidence" value="ECO:0007669"/>
    <property type="project" value="Ensembl"/>
</dbReference>
<dbReference type="CDD" id="cd17719">
    <property type="entry name" value="BRCT_Rev1"/>
    <property type="match status" value="1"/>
</dbReference>
<dbReference type="CDD" id="cd01701">
    <property type="entry name" value="PolY_Rev1"/>
    <property type="match status" value="1"/>
</dbReference>
<dbReference type="CDD" id="cd12145">
    <property type="entry name" value="Rev1_C"/>
    <property type="match status" value="1"/>
</dbReference>
<dbReference type="CDD" id="cd19318">
    <property type="entry name" value="Rev1_UBM2"/>
    <property type="match status" value="2"/>
</dbReference>
<dbReference type="DisProt" id="DP02625"/>
<dbReference type="FunFam" id="1.10.150.20:FF:000025">
    <property type="entry name" value="DNA repair protein REV1"/>
    <property type="match status" value="1"/>
</dbReference>
<dbReference type="FunFam" id="1.20.58.1280:FF:000001">
    <property type="entry name" value="DNA repair protein REV1"/>
    <property type="match status" value="1"/>
</dbReference>
<dbReference type="FunFam" id="3.30.1490.100:FF:000001">
    <property type="entry name" value="DNA repair protein REV1"/>
    <property type="match status" value="1"/>
</dbReference>
<dbReference type="FunFam" id="3.30.70.270:FF:000005">
    <property type="entry name" value="DNA repair protein REV1"/>
    <property type="match status" value="1"/>
</dbReference>
<dbReference type="FunFam" id="3.30.70.270:FF:000010">
    <property type="entry name" value="DNA repair protein REV1"/>
    <property type="match status" value="1"/>
</dbReference>
<dbReference type="FunFam" id="3.40.1170.60:FF:000005">
    <property type="entry name" value="DNA repair protein REV1"/>
    <property type="match status" value="1"/>
</dbReference>
<dbReference type="FunFam" id="3.40.50.10190:FF:000009">
    <property type="entry name" value="DNA repair protein REV1"/>
    <property type="match status" value="1"/>
</dbReference>
<dbReference type="Gene3D" id="3.30.70.270">
    <property type="match status" value="2"/>
</dbReference>
<dbReference type="Gene3D" id="3.40.1170.60">
    <property type="match status" value="1"/>
</dbReference>
<dbReference type="Gene3D" id="6.10.250.1490">
    <property type="match status" value="1"/>
</dbReference>
<dbReference type="Gene3D" id="6.10.250.1630">
    <property type="match status" value="1"/>
</dbReference>
<dbReference type="Gene3D" id="1.10.150.20">
    <property type="entry name" value="5' to 3' exonuclease, C-terminal subdomain"/>
    <property type="match status" value="1"/>
</dbReference>
<dbReference type="Gene3D" id="3.40.50.10190">
    <property type="entry name" value="BRCT domain"/>
    <property type="match status" value="1"/>
</dbReference>
<dbReference type="Gene3D" id="3.30.1490.100">
    <property type="entry name" value="DNA polymerase, Y-family, little finger domain"/>
    <property type="match status" value="1"/>
</dbReference>
<dbReference type="Gene3D" id="1.20.58.1280">
    <property type="entry name" value="DNA repair protein Rev1, C-terminal domain"/>
    <property type="match status" value="1"/>
</dbReference>
<dbReference type="InterPro" id="IPR001357">
    <property type="entry name" value="BRCT_dom"/>
</dbReference>
<dbReference type="InterPro" id="IPR036420">
    <property type="entry name" value="BRCT_dom_sf"/>
</dbReference>
<dbReference type="InterPro" id="IPR043502">
    <property type="entry name" value="DNA/RNA_pol_sf"/>
</dbReference>
<dbReference type="InterPro" id="IPR036775">
    <property type="entry name" value="DNA_pol_Y-fam_lit_finger_sf"/>
</dbReference>
<dbReference type="InterPro" id="IPR017961">
    <property type="entry name" value="DNA_pol_Y-fam_little_finger"/>
</dbReference>
<dbReference type="InterPro" id="IPR025527">
    <property type="entry name" value="HUWE1/Rev1_UBM"/>
</dbReference>
<dbReference type="InterPro" id="IPR053848">
    <property type="entry name" value="IMS_HHH_1"/>
</dbReference>
<dbReference type="InterPro" id="IPR012112">
    <property type="entry name" value="REV1"/>
</dbReference>
<dbReference type="InterPro" id="IPR031991">
    <property type="entry name" value="Rev1_C"/>
</dbReference>
<dbReference type="InterPro" id="IPR038401">
    <property type="entry name" value="Rev1_C_sf"/>
</dbReference>
<dbReference type="InterPro" id="IPR047346">
    <property type="entry name" value="Rev1_UBM1/2"/>
</dbReference>
<dbReference type="InterPro" id="IPR043128">
    <property type="entry name" value="Rev_trsase/Diguanyl_cyclase"/>
</dbReference>
<dbReference type="InterPro" id="IPR001126">
    <property type="entry name" value="UmuC"/>
</dbReference>
<dbReference type="PANTHER" id="PTHR45990">
    <property type="entry name" value="DNA REPAIR PROTEIN REV1"/>
    <property type="match status" value="1"/>
</dbReference>
<dbReference type="PANTHER" id="PTHR45990:SF1">
    <property type="entry name" value="DNA REPAIR PROTEIN REV1"/>
    <property type="match status" value="1"/>
</dbReference>
<dbReference type="Pfam" id="PF16589">
    <property type="entry name" value="BRCT_2"/>
    <property type="match status" value="1"/>
</dbReference>
<dbReference type="Pfam" id="PF00817">
    <property type="entry name" value="IMS"/>
    <property type="match status" value="2"/>
</dbReference>
<dbReference type="Pfam" id="PF11799">
    <property type="entry name" value="IMS_C"/>
    <property type="match status" value="1"/>
</dbReference>
<dbReference type="Pfam" id="PF21999">
    <property type="entry name" value="IMS_HHH_1"/>
    <property type="match status" value="1"/>
</dbReference>
<dbReference type="Pfam" id="PF16727">
    <property type="entry name" value="REV1_C"/>
    <property type="match status" value="1"/>
</dbReference>
<dbReference type="Pfam" id="PF14377">
    <property type="entry name" value="UBM"/>
    <property type="match status" value="2"/>
</dbReference>
<dbReference type="PIRSF" id="PIRSF036573">
    <property type="entry name" value="REV1"/>
    <property type="match status" value="1"/>
</dbReference>
<dbReference type="SMART" id="SM00292">
    <property type="entry name" value="BRCT"/>
    <property type="match status" value="1"/>
</dbReference>
<dbReference type="SUPFAM" id="SSF52113">
    <property type="entry name" value="BRCT domain"/>
    <property type="match status" value="1"/>
</dbReference>
<dbReference type="SUPFAM" id="SSF56672">
    <property type="entry name" value="DNA/RNA polymerases"/>
    <property type="match status" value="1"/>
</dbReference>
<dbReference type="SUPFAM" id="SSF100879">
    <property type="entry name" value="Lesion bypass DNA polymerase (Y-family), little finger domain"/>
    <property type="match status" value="1"/>
</dbReference>
<dbReference type="PROSITE" id="PS50172">
    <property type="entry name" value="BRCT"/>
    <property type="match status" value="1"/>
</dbReference>
<dbReference type="PROSITE" id="PS50173">
    <property type="entry name" value="UMUC"/>
    <property type="match status" value="1"/>
</dbReference>
<protein>
    <recommendedName>
        <fullName>DNA repair protein REV1</fullName>
        <ecNumber>2.7.7.-</ecNumber>
    </recommendedName>
    <alternativeName>
        <fullName>Rev1-like terminal deoxycytidyl transferase</fullName>
    </alternativeName>
</protein>
<sequence>MRRGGWRKRTENDGWEKWGGYMAAKVQKLEEQFRTDAANQKDGTASAIFSGVAIYVNGYTDPSAEELRNLMMLHGGQYHVYYSRSKTTHIIATNLPNAKIKELKGEKVIRPEWIVESIKAGRLLSSAPYQLYTKPSAAQKSLNFNPVCKPEDPGPGPSNRAKQLNNRVNHIIKKIETESEVKANGLSSWNEDGVNDDFSFEDLEHTFPGRKQNGVMHPRDTAVIFNGHTHSSNGALKTQDCLVPVGNSVASRLSLDSTQEEKRAEKSNADFRDCTVQHLQHSTRSADALRSPHRTNSLSPSLHSNTKINGAHHSTVQGPSSTKSTSVLTLSKVAPSVPSKPSDCNFISDFYSRSRLHHISTWKCELTEFVNTLQRQSSGIFPGREKLKKVKTGRSSLVVTDTGTMSVLSSPRHQSCVMHVDMDCFFVSVGIRNRPDLKGKPVAVTSNRGTGTAPLRPGANPQLEWQYYQNRALRGKAADIPDSSVWENQDSTQTNGIDSVLSKAEIASCSYEARQVGIKNGMFFGYAKQLCPNLQAVPYDFHACREVAQAMYETLASYTHSIEAVSCDEALIDVTDILAETKLSPEEFAAALRIEIKDKTKCAASVGIGSNILLARMATKKAKPDGQYHLQPDEVDDFIRGQLVTNLPGVGRSMESKLASLGIKTCGDLQCLTMAKLQKEFGPKTGQMLYRFCRGLDDRPVRTEKERKSVSAEINYGIRFTQPKEAEAFLLSLSEEIQRRLEAAGMKGKRLTLKIMVRKPGAPIETAKFGGHGICDNIARTVTLDQATDSAKIIGKATLNMFHTMKLNISDMRGVGIQVNQLVPANSNLSTCSSRPSAQSSLFSGRPHSVRDLFQLQKAKKPTEEEHKEVFLAAVDLEVSSTSRACGLLSPLSAHLAASVSPDTNSGECSRKWNGLHSPVSGQSRLNLSIEVPSPSQIDQSVLEALPLDLREQIEQVCAAQQGEPRGKKKEPVNGCSSGVLPHPVGTVLLQIPEPQEPCNSDSKISVIALPAFSQVDPDVFAALPAELQKELKAAYDQRQRQGEDTTHQQPTSTSVPKNPLLQLKPPAMKDKRNKRKNLIGSPRKSPLKNKLLSSPAKTLPGAYGSPQKLMDGFLQHEGMASERPLEEVSASTPGAQDLSSLLPGQSSCFRPAAPNLAGAVEFSDVKTLLKEWITTISDPMEEDILQVVRYCTDLIEEKDLEKLDLVIKYMKRLMQQSVESVWNMAFDFILDNVQVVLQQTYGSTLKVT</sequence>
<evidence type="ECO:0000250" key="1"/>
<evidence type="ECO:0000255" key="2"/>
<evidence type="ECO:0000255" key="3">
    <source>
        <dbReference type="PROSITE-ProRule" id="PRU00033"/>
    </source>
</evidence>
<evidence type="ECO:0000255" key="4">
    <source>
        <dbReference type="PROSITE-ProRule" id="PRU00216"/>
    </source>
</evidence>
<evidence type="ECO:0000256" key="5">
    <source>
        <dbReference type="SAM" id="MobiDB-lite"/>
    </source>
</evidence>
<evidence type="ECO:0000269" key="6">
    <source>
    </source>
</evidence>
<evidence type="ECO:0000269" key="7">
    <source>
    </source>
</evidence>
<evidence type="ECO:0000305" key="8"/>
<evidence type="ECO:0007829" key="9">
    <source>
        <dbReference type="PDB" id="6C8C"/>
    </source>
</evidence>
<reference key="1">
    <citation type="journal article" date="2002" name="J. Biol. Chem.">
        <title>Mechanisms of dCMP transferase reactions catalyzed by mouse Rev1 protein.</title>
        <authorList>
            <person name="Masuda Y."/>
            <person name="Takahashi M."/>
            <person name="Fukuda S."/>
            <person name="Sumii M."/>
            <person name="Kamiya K."/>
        </authorList>
    </citation>
    <scope>NUCLEOTIDE SEQUENCE [MRNA]</scope>
    <scope>FUNCTION</scope>
    <scope>SUBUNIT</scope>
    <scope>TISSUE SPECIFICITY</scope>
    <source>
        <strain>C3H/He</strain>
        <tissue>Liver</tissue>
    </source>
</reference>
<reference key="2">
    <citation type="submission" date="1999-08" db="EMBL/GenBank/DDBJ databases">
        <title>Mus musculus REV1 protein (Rev1) mRNA, complete cds.</title>
        <authorList>
            <person name="Poltoratsky V.P."/>
            <person name="Scharff M.D."/>
        </authorList>
    </citation>
    <scope>NUCLEOTIDE SEQUENCE [MRNA]</scope>
</reference>
<reference key="3">
    <citation type="journal article" date="2004" name="Genome Res.">
        <title>The status, quality, and expansion of the NIH full-length cDNA project: the Mammalian Gene Collection (MGC).</title>
        <authorList>
            <consortium name="The MGC Project Team"/>
        </authorList>
    </citation>
    <scope>NUCLEOTIDE SEQUENCE [LARGE SCALE MRNA]</scope>
    <source>
        <strain>C57BL/6J</strain>
        <tissue>Brain</tissue>
    </source>
</reference>
<reference key="4">
    <citation type="journal article" date="2003" name="EMBO J.">
        <title>Mouse Rev1 protein interacts with multiple DNA polymerases involved in translesion DNA synthesis.</title>
        <authorList>
            <person name="Guo C."/>
            <person name="Fischhaber P.L."/>
            <person name="Luk-Paszyc M.J."/>
            <person name="Masuda Y."/>
            <person name="Zhou J."/>
            <person name="Kamiya K."/>
            <person name="Kisker C."/>
            <person name="Friedberg E.C."/>
        </authorList>
    </citation>
    <scope>INTERACTION WITH MAD2L2; POLH; POLI AND POLK</scope>
</reference>
<gene>
    <name type="primary">Rev1</name>
    <name type="synonym">Rev1l</name>
</gene>